<dbReference type="EMBL" id="BA000018">
    <property type="protein sequence ID" value="BAB43372.1"/>
    <property type="molecule type" value="Genomic_DNA"/>
</dbReference>
<dbReference type="PIR" id="C90026">
    <property type="entry name" value="C90026"/>
</dbReference>
<dbReference type="RefSeq" id="WP_001030823.1">
    <property type="nucleotide sequence ID" value="NC_002745.2"/>
</dbReference>
<dbReference type="SMR" id="P64121"/>
<dbReference type="EnsemblBacteria" id="BAB43372">
    <property type="protein sequence ID" value="BAB43372"/>
    <property type="gene ID" value="BAB43372"/>
</dbReference>
<dbReference type="KEGG" id="sau:SA2075"/>
<dbReference type="HOGENOM" id="CLU_056887_4_1_9"/>
<dbReference type="GO" id="GO:0005737">
    <property type="term" value="C:cytoplasm"/>
    <property type="evidence" value="ECO:0007669"/>
    <property type="project" value="UniProtKB-SubCell"/>
</dbReference>
<dbReference type="GO" id="GO:0097163">
    <property type="term" value="F:sulfur carrier activity"/>
    <property type="evidence" value="ECO:0007669"/>
    <property type="project" value="UniProtKB-UniRule"/>
</dbReference>
<dbReference type="GO" id="GO:0016783">
    <property type="term" value="F:sulfurtransferase activity"/>
    <property type="evidence" value="ECO:0007669"/>
    <property type="project" value="InterPro"/>
</dbReference>
<dbReference type="GO" id="GO:0006777">
    <property type="term" value="P:Mo-molybdopterin cofactor biosynthetic process"/>
    <property type="evidence" value="ECO:0007669"/>
    <property type="project" value="UniProtKB-UniRule"/>
</dbReference>
<dbReference type="Gene3D" id="3.10.20.10">
    <property type="match status" value="1"/>
</dbReference>
<dbReference type="Gene3D" id="3.40.140.10">
    <property type="entry name" value="Cytidine Deaminase, domain 2"/>
    <property type="match status" value="1"/>
</dbReference>
<dbReference type="HAMAP" id="MF_00187">
    <property type="entry name" value="FdhD"/>
    <property type="match status" value="1"/>
</dbReference>
<dbReference type="InterPro" id="IPR016193">
    <property type="entry name" value="Cytidine_deaminase-like"/>
</dbReference>
<dbReference type="InterPro" id="IPR003786">
    <property type="entry name" value="FdhD"/>
</dbReference>
<dbReference type="NCBIfam" id="TIGR00129">
    <property type="entry name" value="fdhD_narQ"/>
    <property type="match status" value="1"/>
</dbReference>
<dbReference type="PANTHER" id="PTHR30592">
    <property type="entry name" value="FORMATE DEHYDROGENASE"/>
    <property type="match status" value="1"/>
</dbReference>
<dbReference type="PANTHER" id="PTHR30592:SF1">
    <property type="entry name" value="SULFUR CARRIER PROTEIN FDHD"/>
    <property type="match status" value="1"/>
</dbReference>
<dbReference type="Pfam" id="PF02634">
    <property type="entry name" value="FdhD-NarQ"/>
    <property type="match status" value="1"/>
</dbReference>
<dbReference type="PIRSF" id="PIRSF015626">
    <property type="entry name" value="FdhD"/>
    <property type="match status" value="1"/>
</dbReference>
<dbReference type="SUPFAM" id="SSF53927">
    <property type="entry name" value="Cytidine deaminase-like"/>
    <property type="match status" value="1"/>
</dbReference>
<proteinExistence type="inferred from homology"/>
<organism>
    <name type="scientific">Staphylococcus aureus (strain N315)</name>
    <dbReference type="NCBI Taxonomy" id="158879"/>
    <lineage>
        <taxon>Bacteria</taxon>
        <taxon>Bacillati</taxon>
        <taxon>Bacillota</taxon>
        <taxon>Bacilli</taxon>
        <taxon>Bacillales</taxon>
        <taxon>Staphylococcaceae</taxon>
        <taxon>Staphylococcus</taxon>
    </lineage>
</organism>
<protein>
    <recommendedName>
        <fullName evidence="1">Sulfur carrier protein FdhD</fullName>
    </recommendedName>
</protein>
<keyword id="KW-0963">Cytoplasm</keyword>
<keyword id="KW-0501">Molybdenum cofactor biosynthesis</keyword>
<feature type="chain" id="PRO_0000152924" description="Sulfur carrier protein FdhD">
    <location>
        <begin position="1"/>
        <end position="265"/>
    </location>
</feature>
<feature type="active site" description="Cysteine persulfide intermediate" evidence="1">
    <location>
        <position position="107"/>
    </location>
</feature>
<sequence>MNKDVSLGQPIVRYEDGKLFNTTDQYVTEFPLTIMVNGEEFATVICSPTNLEELVIGFLASEGAILKRDELKSVLIDDSKGFAHVELNKDLGDRFQYSTKRMIASCCGKSREFYFQNDAAIAKTSMSKITLTPIQIINMMTRLQSASHIYQETGGLHNAAISDGLTFFVHRQDIGRHNALDKLYGFCIQRHITVRDKVLIFSGRISSEILIKAAKIGVGVILSKSAPTTLAVTLANDLNITAVGFIRNGGFNIYSHPERIIDSEQ</sequence>
<gene>
    <name evidence="1" type="primary">fdhD</name>
    <name type="synonym">narQ</name>
    <name type="ordered locus">SA2075</name>
</gene>
<comment type="function">
    <text evidence="1">Required for formate dehydrogenase (FDH) activity. Acts as a sulfur carrier protein that transfers sulfur from IscS to the molybdenum cofactor prior to its insertion into FDH.</text>
</comment>
<comment type="subcellular location">
    <subcellularLocation>
        <location evidence="1">Cytoplasm</location>
    </subcellularLocation>
</comment>
<comment type="similarity">
    <text evidence="1">Belongs to the FdhD family.</text>
</comment>
<accession>P64121</accession>
<accession>Q99RZ2</accession>
<evidence type="ECO:0000255" key="1">
    <source>
        <dbReference type="HAMAP-Rule" id="MF_00187"/>
    </source>
</evidence>
<name>FDHD_STAAN</name>
<reference key="1">
    <citation type="journal article" date="2001" name="Lancet">
        <title>Whole genome sequencing of meticillin-resistant Staphylococcus aureus.</title>
        <authorList>
            <person name="Kuroda M."/>
            <person name="Ohta T."/>
            <person name="Uchiyama I."/>
            <person name="Baba T."/>
            <person name="Yuzawa H."/>
            <person name="Kobayashi I."/>
            <person name="Cui L."/>
            <person name="Oguchi A."/>
            <person name="Aoki K."/>
            <person name="Nagai Y."/>
            <person name="Lian J.-Q."/>
            <person name="Ito T."/>
            <person name="Kanamori M."/>
            <person name="Matsumaru H."/>
            <person name="Maruyama A."/>
            <person name="Murakami H."/>
            <person name="Hosoyama A."/>
            <person name="Mizutani-Ui Y."/>
            <person name="Takahashi N.K."/>
            <person name="Sawano T."/>
            <person name="Inoue R."/>
            <person name="Kaito C."/>
            <person name="Sekimizu K."/>
            <person name="Hirakawa H."/>
            <person name="Kuhara S."/>
            <person name="Goto S."/>
            <person name="Yabuzaki J."/>
            <person name="Kanehisa M."/>
            <person name="Yamashita A."/>
            <person name="Oshima K."/>
            <person name="Furuya K."/>
            <person name="Yoshino C."/>
            <person name="Shiba T."/>
            <person name="Hattori M."/>
            <person name="Ogasawara N."/>
            <person name="Hayashi H."/>
            <person name="Hiramatsu K."/>
        </authorList>
    </citation>
    <scope>NUCLEOTIDE SEQUENCE [LARGE SCALE GENOMIC DNA]</scope>
    <source>
        <strain>N315</strain>
    </source>
</reference>